<sequence length="233" mass="26252">MNHLNKLMERLGHQFNNLELLKIALTHRSSGADNNERLEFLGDSVLGFIIASELYQRRPQAREGDLSRMRASMVNGDELAQMSTKLGINEYLQLGVGEQKSGGKRRRSILADALEAIVGAIYIDAGLETCRRCVLNWYGERVDDLSKLSPKKDAKSLLQEWLQARRLPLPTYEVKITGEAHAQTFTVNCYVKGLPHKTEGVNTTRRRAEQIAAKRFLELLDDGKGDGITERDQ</sequence>
<gene>
    <name evidence="1" type="primary">rnc</name>
    <name type="ordered locus">CBUD_0481</name>
</gene>
<evidence type="ECO:0000255" key="1">
    <source>
        <dbReference type="HAMAP-Rule" id="MF_00104"/>
    </source>
</evidence>
<comment type="function">
    <text evidence="1">Digests double-stranded RNA. Involved in the processing of primary rRNA transcript to yield the immediate precursors to the large and small rRNAs (23S and 16S). Processes some mRNAs, and tRNAs when they are encoded in the rRNA operon. Processes pre-crRNA and tracrRNA of type II CRISPR loci if present in the organism.</text>
</comment>
<comment type="catalytic activity">
    <reaction evidence="1">
        <text>Endonucleolytic cleavage to 5'-phosphomonoester.</text>
        <dbReference type="EC" id="3.1.26.3"/>
    </reaction>
</comment>
<comment type="cofactor">
    <cofactor evidence="1">
        <name>Mg(2+)</name>
        <dbReference type="ChEBI" id="CHEBI:18420"/>
    </cofactor>
</comment>
<comment type="subunit">
    <text evidence="1">Homodimer.</text>
</comment>
<comment type="subcellular location">
    <subcellularLocation>
        <location evidence="1">Cytoplasm</location>
    </subcellularLocation>
</comment>
<comment type="similarity">
    <text evidence="1">Belongs to the ribonuclease III family.</text>
</comment>
<dbReference type="EC" id="3.1.26.3" evidence="1"/>
<dbReference type="EMBL" id="CP000733">
    <property type="protein sequence ID" value="ABS77753.1"/>
    <property type="molecule type" value="Genomic_DNA"/>
</dbReference>
<dbReference type="RefSeq" id="WP_005772687.1">
    <property type="nucleotide sequence ID" value="NC_009727.1"/>
</dbReference>
<dbReference type="SMR" id="A9KFA0"/>
<dbReference type="KEGG" id="cbd:CBUD_0481"/>
<dbReference type="HOGENOM" id="CLU_000907_1_1_6"/>
<dbReference type="Proteomes" id="UP000008555">
    <property type="component" value="Chromosome"/>
</dbReference>
<dbReference type="GO" id="GO:0005737">
    <property type="term" value="C:cytoplasm"/>
    <property type="evidence" value="ECO:0007669"/>
    <property type="project" value="UniProtKB-SubCell"/>
</dbReference>
<dbReference type="GO" id="GO:0003725">
    <property type="term" value="F:double-stranded RNA binding"/>
    <property type="evidence" value="ECO:0007669"/>
    <property type="project" value="TreeGrafter"/>
</dbReference>
<dbReference type="GO" id="GO:0046872">
    <property type="term" value="F:metal ion binding"/>
    <property type="evidence" value="ECO:0007669"/>
    <property type="project" value="UniProtKB-KW"/>
</dbReference>
<dbReference type="GO" id="GO:0004525">
    <property type="term" value="F:ribonuclease III activity"/>
    <property type="evidence" value="ECO:0007669"/>
    <property type="project" value="UniProtKB-UniRule"/>
</dbReference>
<dbReference type="GO" id="GO:0019843">
    <property type="term" value="F:rRNA binding"/>
    <property type="evidence" value="ECO:0007669"/>
    <property type="project" value="UniProtKB-KW"/>
</dbReference>
<dbReference type="GO" id="GO:0006397">
    <property type="term" value="P:mRNA processing"/>
    <property type="evidence" value="ECO:0007669"/>
    <property type="project" value="UniProtKB-UniRule"/>
</dbReference>
<dbReference type="GO" id="GO:0010468">
    <property type="term" value="P:regulation of gene expression"/>
    <property type="evidence" value="ECO:0007669"/>
    <property type="project" value="TreeGrafter"/>
</dbReference>
<dbReference type="GO" id="GO:0006364">
    <property type="term" value="P:rRNA processing"/>
    <property type="evidence" value="ECO:0007669"/>
    <property type="project" value="UniProtKB-UniRule"/>
</dbReference>
<dbReference type="GO" id="GO:0008033">
    <property type="term" value="P:tRNA processing"/>
    <property type="evidence" value="ECO:0007669"/>
    <property type="project" value="UniProtKB-KW"/>
</dbReference>
<dbReference type="CDD" id="cd10845">
    <property type="entry name" value="DSRM_RNAse_III_family"/>
    <property type="match status" value="1"/>
</dbReference>
<dbReference type="CDD" id="cd00593">
    <property type="entry name" value="RIBOc"/>
    <property type="match status" value="1"/>
</dbReference>
<dbReference type="FunFam" id="1.10.1520.10:FF:000001">
    <property type="entry name" value="Ribonuclease 3"/>
    <property type="match status" value="1"/>
</dbReference>
<dbReference type="FunFam" id="3.30.160.20:FF:000003">
    <property type="entry name" value="Ribonuclease 3"/>
    <property type="match status" value="1"/>
</dbReference>
<dbReference type="Gene3D" id="3.30.160.20">
    <property type="match status" value="1"/>
</dbReference>
<dbReference type="Gene3D" id="1.10.1520.10">
    <property type="entry name" value="Ribonuclease III domain"/>
    <property type="match status" value="1"/>
</dbReference>
<dbReference type="HAMAP" id="MF_00104">
    <property type="entry name" value="RNase_III"/>
    <property type="match status" value="1"/>
</dbReference>
<dbReference type="InterPro" id="IPR014720">
    <property type="entry name" value="dsRBD_dom"/>
</dbReference>
<dbReference type="InterPro" id="IPR011907">
    <property type="entry name" value="RNase_III"/>
</dbReference>
<dbReference type="InterPro" id="IPR000999">
    <property type="entry name" value="RNase_III_dom"/>
</dbReference>
<dbReference type="InterPro" id="IPR036389">
    <property type="entry name" value="RNase_III_sf"/>
</dbReference>
<dbReference type="NCBIfam" id="TIGR02191">
    <property type="entry name" value="RNaseIII"/>
    <property type="match status" value="1"/>
</dbReference>
<dbReference type="PANTHER" id="PTHR11207:SF0">
    <property type="entry name" value="RIBONUCLEASE 3"/>
    <property type="match status" value="1"/>
</dbReference>
<dbReference type="PANTHER" id="PTHR11207">
    <property type="entry name" value="RIBONUCLEASE III"/>
    <property type="match status" value="1"/>
</dbReference>
<dbReference type="Pfam" id="PF00035">
    <property type="entry name" value="dsrm"/>
    <property type="match status" value="1"/>
</dbReference>
<dbReference type="Pfam" id="PF14622">
    <property type="entry name" value="Ribonucleas_3_3"/>
    <property type="match status" value="1"/>
</dbReference>
<dbReference type="SMART" id="SM00358">
    <property type="entry name" value="DSRM"/>
    <property type="match status" value="1"/>
</dbReference>
<dbReference type="SMART" id="SM00535">
    <property type="entry name" value="RIBOc"/>
    <property type="match status" value="1"/>
</dbReference>
<dbReference type="SUPFAM" id="SSF54768">
    <property type="entry name" value="dsRNA-binding domain-like"/>
    <property type="match status" value="1"/>
</dbReference>
<dbReference type="SUPFAM" id="SSF69065">
    <property type="entry name" value="RNase III domain-like"/>
    <property type="match status" value="1"/>
</dbReference>
<dbReference type="PROSITE" id="PS50137">
    <property type="entry name" value="DS_RBD"/>
    <property type="match status" value="1"/>
</dbReference>
<dbReference type="PROSITE" id="PS00517">
    <property type="entry name" value="RNASE_3_1"/>
    <property type="match status" value="1"/>
</dbReference>
<dbReference type="PROSITE" id="PS50142">
    <property type="entry name" value="RNASE_3_2"/>
    <property type="match status" value="1"/>
</dbReference>
<organism>
    <name type="scientific">Coxiella burnetii (strain Dugway 5J108-111)</name>
    <dbReference type="NCBI Taxonomy" id="434922"/>
    <lineage>
        <taxon>Bacteria</taxon>
        <taxon>Pseudomonadati</taxon>
        <taxon>Pseudomonadota</taxon>
        <taxon>Gammaproteobacteria</taxon>
        <taxon>Legionellales</taxon>
        <taxon>Coxiellaceae</taxon>
        <taxon>Coxiella</taxon>
    </lineage>
</organism>
<reference key="1">
    <citation type="journal article" date="2009" name="Infect. Immun.">
        <title>Comparative genomics reveal extensive transposon-mediated genomic plasticity and diversity among potential effector proteins within the genus Coxiella.</title>
        <authorList>
            <person name="Beare P.A."/>
            <person name="Unsworth N."/>
            <person name="Andoh M."/>
            <person name="Voth D.E."/>
            <person name="Omsland A."/>
            <person name="Gilk S.D."/>
            <person name="Williams K.P."/>
            <person name="Sobral B.W."/>
            <person name="Kupko J.J. III"/>
            <person name="Porcella S.F."/>
            <person name="Samuel J.E."/>
            <person name="Heinzen R.A."/>
        </authorList>
    </citation>
    <scope>NUCLEOTIDE SEQUENCE [LARGE SCALE GENOMIC DNA]</scope>
    <source>
        <strain>Dugway 5J108-111</strain>
    </source>
</reference>
<keyword id="KW-0963">Cytoplasm</keyword>
<keyword id="KW-0255">Endonuclease</keyword>
<keyword id="KW-0378">Hydrolase</keyword>
<keyword id="KW-0460">Magnesium</keyword>
<keyword id="KW-0479">Metal-binding</keyword>
<keyword id="KW-0507">mRNA processing</keyword>
<keyword id="KW-0540">Nuclease</keyword>
<keyword id="KW-0694">RNA-binding</keyword>
<keyword id="KW-0698">rRNA processing</keyword>
<keyword id="KW-0699">rRNA-binding</keyword>
<keyword id="KW-0819">tRNA processing</keyword>
<name>RNC_COXBN</name>
<accession>A9KFA0</accession>
<proteinExistence type="inferred from homology"/>
<feature type="chain" id="PRO_1000075741" description="Ribonuclease 3">
    <location>
        <begin position="1"/>
        <end position="233"/>
    </location>
</feature>
<feature type="domain" description="RNase III" evidence="1">
    <location>
        <begin position="4"/>
        <end position="126"/>
    </location>
</feature>
<feature type="domain" description="DRBM" evidence="1">
    <location>
        <begin position="153"/>
        <end position="222"/>
    </location>
</feature>
<feature type="active site" evidence="1">
    <location>
        <position position="43"/>
    </location>
</feature>
<feature type="active site" evidence="1">
    <location>
        <position position="115"/>
    </location>
</feature>
<feature type="binding site" evidence="1">
    <location>
        <position position="39"/>
    </location>
    <ligand>
        <name>Mg(2+)</name>
        <dbReference type="ChEBI" id="CHEBI:18420"/>
    </ligand>
</feature>
<feature type="binding site" evidence="1">
    <location>
        <position position="112"/>
    </location>
    <ligand>
        <name>Mg(2+)</name>
        <dbReference type="ChEBI" id="CHEBI:18420"/>
    </ligand>
</feature>
<feature type="binding site" evidence="1">
    <location>
        <position position="115"/>
    </location>
    <ligand>
        <name>Mg(2+)</name>
        <dbReference type="ChEBI" id="CHEBI:18420"/>
    </ligand>
</feature>
<protein>
    <recommendedName>
        <fullName evidence="1">Ribonuclease 3</fullName>
        <ecNumber evidence="1">3.1.26.3</ecNumber>
    </recommendedName>
    <alternativeName>
        <fullName evidence="1">Ribonuclease III</fullName>
        <shortName evidence="1">RNase III</shortName>
    </alternativeName>
</protein>